<gene>
    <name evidence="1" type="primary">pyrR</name>
    <name type="ordered locus">PTH_1813</name>
</gene>
<dbReference type="EC" id="2.4.2.9" evidence="1"/>
<dbReference type="EMBL" id="AP009389">
    <property type="protein sequence ID" value="BAF59994.1"/>
    <property type="molecule type" value="Genomic_DNA"/>
</dbReference>
<dbReference type="SMR" id="A5D172"/>
<dbReference type="STRING" id="370438.PTH_1813"/>
<dbReference type="KEGG" id="pth:PTH_1813"/>
<dbReference type="eggNOG" id="COG2065">
    <property type="taxonomic scope" value="Bacteria"/>
</dbReference>
<dbReference type="HOGENOM" id="CLU_094234_2_1_9"/>
<dbReference type="Proteomes" id="UP000006556">
    <property type="component" value="Chromosome"/>
</dbReference>
<dbReference type="GO" id="GO:0003723">
    <property type="term" value="F:RNA binding"/>
    <property type="evidence" value="ECO:0007669"/>
    <property type="project" value="UniProtKB-UniRule"/>
</dbReference>
<dbReference type="GO" id="GO:0004845">
    <property type="term" value="F:uracil phosphoribosyltransferase activity"/>
    <property type="evidence" value="ECO:0007669"/>
    <property type="project" value="UniProtKB-UniRule"/>
</dbReference>
<dbReference type="GO" id="GO:0006353">
    <property type="term" value="P:DNA-templated transcription termination"/>
    <property type="evidence" value="ECO:0007669"/>
    <property type="project" value="UniProtKB-UniRule"/>
</dbReference>
<dbReference type="CDD" id="cd06223">
    <property type="entry name" value="PRTases_typeI"/>
    <property type="match status" value="1"/>
</dbReference>
<dbReference type="FunFam" id="3.40.50.2020:FF:000020">
    <property type="entry name" value="Bifunctional protein PyrR"/>
    <property type="match status" value="1"/>
</dbReference>
<dbReference type="Gene3D" id="3.40.50.2020">
    <property type="match status" value="1"/>
</dbReference>
<dbReference type="HAMAP" id="MF_01219">
    <property type="entry name" value="PyrR"/>
    <property type="match status" value="1"/>
</dbReference>
<dbReference type="InterPro" id="IPR000836">
    <property type="entry name" value="PRibTrfase_dom"/>
</dbReference>
<dbReference type="InterPro" id="IPR029057">
    <property type="entry name" value="PRTase-like"/>
</dbReference>
<dbReference type="InterPro" id="IPR023050">
    <property type="entry name" value="PyrR"/>
</dbReference>
<dbReference type="InterPro" id="IPR050137">
    <property type="entry name" value="PyrR_bifunctional"/>
</dbReference>
<dbReference type="NCBIfam" id="NF003545">
    <property type="entry name" value="PRK05205.1-1"/>
    <property type="match status" value="1"/>
</dbReference>
<dbReference type="NCBIfam" id="NF003547">
    <property type="entry name" value="PRK05205.1-3"/>
    <property type="match status" value="1"/>
</dbReference>
<dbReference type="NCBIfam" id="NF003548">
    <property type="entry name" value="PRK05205.1-4"/>
    <property type="match status" value="1"/>
</dbReference>
<dbReference type="NCBIfam" id="NF003549">
    <property type="entry name" value="PRK05205.1-5"/>
    <property type="match status" value="1"/>
</dbReference>
<dbReference type="PANTHER" id="PTHR11608">
    <property type="entry name" value="BIFUNCTIONAL PROTEIN PYRR"/>
    <property type="match status" value="1"/>
</dbReference>
<dbReference type="PANTHER" id="PTHR11608:SF0">
    <property type="entry name" value="BIFUNCTIONAL PROTEIN PYRR"/>
    <property type="match status" value="1"/>
</dbReference>
<dbReference type="Pfam" id="PF00156">
    <property type="entry name" value="Pribosyltran"/>
    <property type="match status" value="1"/>
</dbReference>
<dbReference type="SUPFAM" id="SSF53271">
    <property type="entry name" value="PRTase-like"/>
    <property type="match status" value="1"/>
</dbReference>
<accession>A5D172</accession>
<protein>
    <recommendedName>
        <fullName evidence="1">Bifunctional protein PyrR</fullName>
    </recommendedName>
    <domain>
        <recommendedName>
            <fullName evidence="1">Pyrimidine operon regulatory protein</fullName>
        </recommendedName>
    </domain>
    <domain>
        <recommendedName>
            <fullName evidence="1">Uracil phosphoribosyltransferase</fullName>
            <shortName evidence="1">UPRTase</shortName>
            <ecNumber evidence="1">2.4.2.9</ecNumber>
        </recommendedName>
    </domain>
</protein>
<evidence type="ECO:0000255" key="1">
    <source>
        <dbReference type="HAMAP-Rule" id="MF_01219"/>
    </source>
</evidence>
<name>PYRR_PELTS</name>
<comment type="function">
    <text evidence="1">Regulates transcriptional attenuation of the pyrimidine nucleotide (pyr) operon by binding in a uridine-dependent manner to specific sites on pyr mRNA. This disrupts an antiterminator hairpin in the RNA and favors formation of a downstream transcription terminator, leading to a reduced expression of downstream genes.</text>
</comment>
<comment type="function">
    <text evidence="1">Also displays a weak uracil phosphoribosyltransferase activity which is not physiologically significant.</text>
</comment>
<comment type="catalytic activity">
    <reaction evidence="1">
        <text>UMP + diphosphate = 5-phospho-alpha-D-ribose 1-diphosphate + uracil</text>
        <dbReference type="Rhea" id="RHEA:13017"/>
        <dbReference type="ChEBI" id="CHEBI:17568"/>
        <dbReference type="ChEBI" id="CHEBI:33019"/>
        <dbReference type="ChEBI" id="CHEBI:57865"/>
        <dbReference type="ChEBI" id="CHEBI:58017"/>
        <dbReference type="EC" id="2.4.2.9"/>
    </reaction>
</comment>
<comment type="subunit">
    <text evidence="1">Homodimer and homohexamer; in equilibrium.</text>
</comment>
<comment type="similarity">
    <text evidence="1">Belongs to the purine/pyrimidine phosphoribosyltransferase family. PyrR subfamily.</text>
</comment>
<keyword id="KW-0328">Glycosyltransferase</keyword>
<keyword id="KW-1185">Reference proteome</keyword>
<keyword id="KW-0694">RNA-binding</keyword>
<keyword id="KW-0804">Transcription</keyword>
<keyword id="KW-0805">Transcription regulation</keyword>
<keyword id="KW-0806">Transcription termination</keyword>
<keyword id="KW-0808">Transferase</keyword>
<feature type="chain" id="PRO_1000085653" description="Bifunctional protein PyrR">
    <location>
        <begin position="1"/>
        <end position="181"/>
    </location>
</feature>
<feature type="short sequence motif" description="PRPP-binding" evidence="1">
    <location>
        <begin position="100"/>
        <end position="112"/>
    </location>
</feature>
<reference key="1">
    <citation type="journal article" date="2008" name="Genome Res.">
        <title>The genome of Pelotomaculum thermopropionicum reveals niche-associated evolution in anaerobic microbiota.</title>
        <authorList>
            <person name="Kosaka T."/>
            <person name="Kato S."/>
            <person name="Shimoyama T."/>
            <person name="Ishii S."/>
            <person name="Abe T."/>
            <person name="Watanabe K."/>
        </authorList>
    </citation>
    <scope>NUCLEOTIDE SEQUENCE [LARGE SCALE GENOMIC DNA]</scope>
    <source>
        <strain>DSM 13744 / JCM 10971 / SI</strain>
    </source>
</reference>
<sequence>MAREKAQILDKDGIRRSLTRIAHEIIERNKGTGNLVLVGIRRRGVPLAERLAGRIKDIEGRTVPVGILDITLYRDDLTTLAHQPVVRSTEVPFSVSGKIVVLVDDVIYTGRTVRAALDAIMDLGRPKLIQLAVLIDRGHRELPIRADYVGKNVPTSSREEVSVRLQEIDGEERVVILETAE</sequence>
<organism>
    <name type="scientific">Pelotomaculum thermopropionicum (strain DSM 13744 / JCM 10971 / SI)</name>
    <dbReference type="NCBI Taxonomy" id="370438"/>
    <lineage>
        <taxon>Bacteria</taxon>
        <taxon>Bacillati</taxon>
        <taxon>Bacillota</taxon>
        <taxon>Clostridia</taxon>
        <taxon>Eubacteriales</taxon>
        <taxon>Desulfotomaculaceae</taxon>
        <taxon>Pelotomaculum</taxon>
    </lineage>
</organism>
<proteinExistence type="inferred from homology"/>